<keyword id="KW-0223">Dioxygenase</keyword>
<keyword id="KW-0349">Heme</keyword>
<keyword id="KW-0408">Iron</keyword>
<keyword id="KW-0479">Metal-binding</keyword>
<keyword id="KW-0560">Oxidoreductase</keyword>
<keyword id="KW-1185">Reference proteome</keyword>
<keyword id="KW-0823">Tryptophan catabolism</keyword>
<protein>
    <recommendedName>
        <fullName evidence="1">Tryptophan 2,3-dioxygenase</fullName>
        <shortName evidence="1">TDO</shortName>
        <ecNumber evidence="1">1.13.11.11</ecNumber>
    </recommendedName>
    <alternativeName>
        <fullName evidence="1">Tryptamin 2,3-dioxygenase</fullName>
    </alternativeName>
    <alternativeName>
        <fullName evidence="1">Tryptophan oxygenase</fullName>
        <shortName evidence="1">TO</shortName>
        <shortName evidence="1">TRPO</shortName>
    </alternativeName>
    <alternativeName>
        <fullName evidence="1">Tryptophan pyrrolase</fullName>
    </alternativeName>
    <alternativeName>
        <fullName evidence="1">Tryptophanase</fullName>
    </alternativeName>
</protein>
<accession>Q5EBG2</accession>
<feature type="chain" id="PRO_0000247477" description="Tryptophan 2,3-dioxygenase">
    <location>
        <begin position="1"/>
        <end position="406"/>
    </location>
</feature>
<feature type="binding site" evidence="1">
    <location>
        <begin position="72"/>
        <end position="76"/>
    </location>
    <ligand>
        <name>substrate</name>
    </ligand>
</feature>
<feature type="binding site" evidence="1">
    <location>
        <position position="144"/>
    </location>
    <ligand>
        <name>substrate</name>
    </ligand>
</feature>
<feature type="binding site" description="axial binding residue" evidence="1">
    <location>
        <position position="328"/>
    </location>
    <ligand>
        <name>heme</name>
        <dbReference type="ChEBI" id="CHEBI:30413"/>
    </ligand>
    <ligandPart>
        <name>Fe</name>
        <dbReference type="ChEBI" id="CHEBI:18248"/>
    </ligandPart>
</feature>
<feature type="binding site" evidence="1">
    <location>
        <position position="342"/>
    </location>
    <ligand>
        <name>substrate</name>
    </ligand>
</feature>
<sequence length="406" mass="47700">MSGCPFMGKKHHFNFSELSLEDKNEDSSQEGLNKASKGGLIYGDYLQLDKVLNAQELQSEKKGNKIHDEHLFIVTHQAYELWFKQILWELDSVREIFQNGHVRDERNMLKVVTRIHRISMILKLLVEQFSVLETMTAMDFFDFRDYLSPASGFQSLQFRLLENKIGVPEILRVPYNRRHYRDNFKGETNELLLKSEQELTLLGLVEAWLERTPGLEEEGFHFWGKLEANIFRGLEEELQTVKTKPDSEEKEEQLAELQKQKELFGALFDERRHEHLLSKGERRLSYKALKGALMIYFYREEPRFQVPFQLLTSLMDIDTLMTKWRYNHVCMVHRMIGSKAGTGGSSGYQYLRSTVSDRYKVFVDLFNLSTYLVPRHWVPRLNPSIHKFLYTAECCDSSYFSSDDSD</sequence>
<dbReference type="EC" id="1.13.11.11" evidence="1"/>
<dbReference type="EMBL" id="BC089667">
    <property type="protein sequence ID" value="AAH89667.1"/>
    <property type="molecule type" value="mRNA"/>
</dbReference>
<dbReference type="RefSeq" id="NP_001015733.1">
    <property type="nucleotide sequence ID" value="NM_001015733.1"/>
</dbReference>
<dbReference type="SMR" id="Q5EBG2"/>
<dbReference type="FunCoup" id="Q5EBG2">
    <property type="interactions" value="272"/>
</dbReference>
<dbReference type="STRING" id="8364.ENSXETP00000020291"/>
<dbReference type="PaxDb" id="8364-ENSXETP00000048482"/>
<dbReference type="DNASU" id="548450"/>
<dbReference type="GeneID" id="548450"/>
<dbReference type="KEGG" id="xtr:548450"/>
<dbReference type="AGR" id="Xenbase:XB-GENE-976712"/>
<dbReference type="CTD" id="6999"/>
<dbReference type="Xenbase" id="XB-GENE-976712">
    <property type="gene designation" value="tdo2"/>
</dbReference>
<dbReference type="eggNOG" id="KOG3906">
    <property type="taxonomic scope" value="Eukaryota"/>
</dbReference>
<dbReference type="HOGENOM" id="CLU_045599_1_1_1"/>
<dbReference type="InParanoid" id="Q5EBG2"/>
<dbReference type="OMA" id="WRWRNDH"/>
<dbReference type="OrthoDB" id="447477at2759"/>
<dbReference type="PhylomeDB" id="Q5EBG2"/>
<dbReference type="TreeFam" id="TF105827"/>
<dbReference type="Reactome" id="R-XTR-71240">
    <property type="pathway name" value="Tryptophan catabolism"/>
</dbReference>
<dbReference type="UniPathway" id="UPA00333">
    <property type="reaction ID" value="UER00453"/>
</dbReference>
<dbReference type="Proteomes" id="UP000008143">
    <property type="component" value="Chromosome 1"/>
</dbReference>
<dbReference type="Bgee" id="ENSXETG00000022396">
    <property type="expression patterns" value="Expressed in liver and 9 other cell types or tissues"/>
</dbReference>
<dbReference type="GO" id="GO:0020037">
    <property type="term" value="F:heme binding"/>
    <property type="evidence" value="ECO:0007669"/>
    <property type="project" value="UniProtKB-UniRule"/>
</dbReference>
<dbReference type="GO" id="GO:0046872">
    <property type="term" value="F:metal ion binding"/>
    <property type="evidence" value="ECO:0007669"/>
    <property type="project" value="UniProtKB-KW"/>
</dbReference>
<dbReference type="GO" id="GO:0004833">
    <property type="term" value="F:tryptophan 2,3-dioxygenase activity"/>
    <property type="evidence" value="ECO:0000250"/>
    <property type="project" value="UniProtKB"/>
</dbReference>
<dbReference type="GO" id="GO:0019441">
    <property type="term" value="P:L-tryptophan catabolic process to kynurenine"/>
    <property type="evidence" value="ECO:0000250"/>
    <property type="project" value="UniProtKB"/>
</dbReference>
<dbReference type="GO" id="GO:0051289">
    <property type="term" value="P:protein homotetramerization"/>
    <property type="evidence" value="ECO:0000250"/>
    <property type="project" value="UniProtKB"/>
</dbReference>
<dbReference type="FunFam" id="1.10.287.3810:FF:000001">
    <property type="entry name" value="Tryptophan 2,3-dioxygenase"/>
    <property type="match status" value="1"/>
</dbReference>
<dbReference type="Gene3D" id="1.10.287.3810">
    <property type="match status" value="1"/>
</dbReference>
<dbReference type="Gene3D" id="1.20.58.480">
    <property type="match status" value="1"/>
</dbReference>
<dbReference type="HAMAP" id="MF_01972">
    <property type="entry name" value="T23O"/>
    <property type="match status" value="1"/>
</dbReference>
<dbReference type="InterPro" id="IPR037217">
    <property type="entry name" value="Trp/Indoleamine_2_3_dOase-like"/>
</dbReference>
<dbReference type="InterPro" id="IPR004981">
    <property type="entry name" value="Trp_2_3_dOase"/>
</dbReference>
<dbReference type="PANTHER" id="PTHR10138">
    <property type="entry name" value="TRYPTOPHAN 2,3-DIOXYGENASE"/>
    <property type="match status" value="1"/>
</dbReference>
<dbReference type="PANTHER" id="PTHR10138:SF0">
    <property type="entry name" value="TRYPTOPHAN 2,3-DIOXYGENASE"/>
    <property type="match status" value="1"/>
</dbReference>
<dbReference type="Pfam" id="PF03301">
    <property type="entry name" value="Trp_dioxygenase"/>
    <property type="match status" value="1"/>
</dbReference>
<dbReference type="SUPFAM" id="SSF140959">
    <property type="entry name" value="Indolic compounds 2,3-dioxygenase-like"/>
    <property type="match status" value="1"/>
</dbReference>
<proteinExistence type="evidence at transcript level"/>
<gene>
    <name evidence="1" type="primary">tdo2</name>
</gene>
<comment type="function">
    <text evidence="1">Heme-dependent dioxygenase that catalyzes the oxidative cleavage of the L-tryptophan (L-Trp) pyrrole ring and converts L-tryptophan to N-formyl-L-kynurenine. Catalyzes the oxidative cleavage of the indole moiety.</text>
</comment>
<comment type="catalytic activity">
    <reaction evidence="1">
        <text>L-tryptophan + O2 = N-formyl-L-kynurenine</text>
        <dbReference type="Rhea" id="RHEA:24536"/>
        <dbReference type="ChEBI" id="CHEBI:15379"/>
        <dbReference type="ChEBI" id="CHEBI:57912"/>
        <dbReference type="ChEBI" id="CHEBI:58629"/>
        <dbReference type="EC" id="1.13.11.11"/>
    </reaction>
</comment>
<comment type="cofactor">
    <cofactor evidence="1">
        <name>heme</name>
        <dbReference type="ChEBI" id="CHEBI:30413"/>
    </cofactor>
    <text evidence="1">Binds 1 heme group per subunit.</text>
</comment>
<comment type="pathway">
    <text evidence="1">Amino-acid degradation; L-tryptophan degradation via kynurenine pathway; L-kynurenine from L-tryptophan: step 1/2.</text>
</comment>
<comment type="subunit">
    <text evidence="1">Homotetramer. Dimer of dimers.</text>
</comment>
<comment type="similarity">
    <text evidence="1">Belongs to the tryptophan 2,3-dioxygenase family.</text>
</comment>
<name>T23O_XENTR</name>
<organism>
    <name type="scientific">Xenopus tropicalis</name>
    <name type="common">Western clawed frog</name>
    <name type="synonym">Silurana tropicalis</name>
    <dbReference type="NCBI Taxonomy" id="8364"/>
    <lineage>
        <taxon>Eukaryota</taxon>
        <taxon>Metazoa</taxon>
        <taxon>Chordata</taxon>
        <taxon>Craniata</taxon>
        <taxon>Vertebrata</taxon>
        <taxon>Euteleostomi</taxon>
        <taxon>Amphibia</taxon>
        <taxon>Batrachia</taxon>
        <taxon>Anura</taxon>
        <taxon>Pipoidea</taxon>
        <taxon>Pipidae</taxon>
        <taxon>Xenopodinae</taxon>
        <taxon>Xenopus</taxon>
        <taxon>Silurana</taxon>
    </lineage>
</organism>
<evidence type="ECO:0000255" key="1">
    <source>
        <dbReference type="HAMAP-Rule" id="MF_03020"/>
    </source>
</evidence>
<reference key="1">
    <citation type="submission" date="2005-02" db="EMBL/GenBank/DDBJ databases">
        <authorList>
            <consortium name="NIH - Xenopus Gene Collection (XGC) project"/>
        </authorList>
    </citation>
    <scope>NUCLEOTIDE SEQUENCE [LARGE SCALE MRNA]</scope>
</reference>